<proteinExistence type="inferred from homology"/>
<protein>
    <recommendedName>
        <fullName evidence="1">Histidinol dehydrogenase</fullName>
        <shortName evidence="1">HDH</shortName>
        <ecNumber evidence="1">1.1.1.23</ecNumber>
    </recommendedName>
</protein>
<keyword id="KW-0028">Amino-acid biosynthesis</keyword>
<keyword id="KW-0368">Histidine biosynthesis</keyword>
<keyword id="KW-0479">Metal-binding</keyword>
<keyword id="KW-0520">NAD</keyword>
<keyword id="KW-0560">Oxidoreductase</keyword>
<keyword id="KW-0862">Zinc</keyword>
<reference key="1">
    <citation type="journal article" date="2006" name="PLoS Biol.">
        <title>The genome of deep-sea vent chemolithoautotroph Thiomicrospira crunogena XCL-2.</title>
        <authorList>
            <person name="Scott K.M."/>
            <person name="Sievert S.M."/>
            <person name="Abril F.N."/>
            <person name="Ball L.A."/>
            <person name="Barrett C.J."/>
            <person name="Blake R.A."/>
            <person name="Boller A.J."/>
            <person name="Chain P.S.G."/>
            <person name="Clark J.A."/>
            <person name="Davis C.R."/>
            <person name="Detter C."/>
            <person name="Do K.F."/>
            <person name="Dobrinski K.P."/>
            <person name="Faza B.I."/>
            <person name="Fitzpatrick K.A."/>
            <person name="Freyermuth S.K."/>
            <person name="Harmer T.L."/>
            <person name="Hauser L.J."/>
            <person name="Huegler M."/>
            <person name="Kerfeld C.A."/>
            <person name="Klotz M.G."/>
            <person name="Kong W.W."/>
            <person name="Land M."/>
            <person name="Lapidus A."/>
            <person name="Larimer F.W."/>
            <person name="Longo D.L."/>
            <person name="Lucas S."/>
            <person name="Malfatti S.A."/>
            <person name="Massey S.E."/>
            <person name="Martin D.D."/>
            <person name="McCuddin Z."/>
            <person name="Meyer F."/>
            <person name="Moore J.L."/>
            <person name="Ocampo L.H. Jr."/>
            <person name="Paul J.H."/>
            <person name="Paulsen I.T."/>
            <person name="Reep D.K."/>
            <person name="Ren Q."/>
            <person name="Ross R.L."/>
            <person name="Sato P.Y."/>
            <person name="Thomas P."/>
            <person name="Tinkham L.E."/>
            <person name="Zeruth G.T."/>
        </authorList>
    </citation>
    <scope>NUCLEOTIDE SEQUENCE [LARGE SCALE GENOMIC DNA]</scope>
    <source>
        <strain>DSM 25203 / XCL-2</strain>
    </source>
</reference>
<sequence>MLNIRKLSANADGFKAELEALLAWETVSNDSVNEIVKDVLKNVRERGDEALLEYTAKFDRLTLAKGSDLEIPKSELEAALKRIPKDQRDGLELSAQRVKDYHEKQVMKSWSYTEDDGTFLGQQVTCLDRVGLYVPGGKAAYPSSVIMNAIPAKVAGVPELIMVVPTPDGEVNDMVLAAAAICGVDRVFTLGGAQAVAALAYGTETVPPVDKVVGPGNIFVATAKREVFGTVGIDMIAGPSEILVYCDGKTNPDWIAMDLFSQAEHDEDAQSILVTQDAEFAEKVYLSMNKLVKTLPREEIITKAITDRGAIIVVDNEDQAIELINYIAPEHLELSIDEPKALLPKIKHAGAIFMGRFTAEALGDYCAGPNHVLPTSRTARFSSPLGVYDFQKRSSLIMCSAEGANMLGQVAGVLADGEGLQAHAASARYRVKD</sequence>
<comment type="function">
    <text evidence="1">Catalyzes the sequential NAD-dependent oxidations of L-histidinol to L-histidinaldehyde and then to L-histidine.</text>
</comment>
<comment type="catalytic activity">
    <reaction evidence="1">
        <text>L-histidinol + 2 NAD(+) + H2O = L-histidine + 2 NADH + 3 H(+)</text>
        <dbReference type="Rhea" id="RHEA:20641"/>
        <dbReference type="ChEBI" id="CHEBI:15377"/>
        <dbReference type="ChEBI" id="CHEBI:15378"/>
        <dbReference type="ChEBI" id="CHEBI:57540"/>
        <dbReference type="ChEBI" id="CHEBI:57595"/>
        <dbReference type="ChEBI" id="CHEBI:57699"/>
        <dbReference type="ChEBI" id="CHEBI:57945"/>
        <dbReference type="EC" id="1.1.1.23"/>
    </reaction>
</comment>
<comment type="cofactor">
    <cofactor evidence="1">
        <name>Zn(2+)</name>
        <dbReference type="ChEBI" id="CHEBI:29105"/>
    </cofactor>
    <text evidence="1">Binds 1 zinc ion per subunit.</text>
</comment>
<comment type="pathway">
    <text evidence="1">Amino-acid biosynthesis; L-histidine biosynthesis; L-histidine from 5-phospho-alpha-D-ribose 1-diphosphate: step 9/9.</text>
</comment>
<comment type="similarity">
    <text evidence="1">Belongs to the histidinol dehydrogenase family.</text>
</comment>
<evidence type="ECO:0000255" key="1">
    <source>
        <dbReference type="HAMAP-Rule" id="MF_01024"/>
    </source>
</evidence>
<gene>
    <name evidence="1" type="primary">hisD</name>
    <name type="ordered locus">Tcr_0989</name>
</gene>
<organism>
    <name type="scientific">Hydrogenovibrio crunogenus (strain DSM 25203 / XCL-2)</name>
    <name type="common">Thiomicrospira crunogena</name>
    <dbReference type="NCBI Taxonomy" id="317025"/>
    <lineage>
        <taxon>Bacteria</taxon>
        <taxon>Pseudomonadati</taxon>
        <taxon>Pseudomonadota</taxon>
        <taxon>Gammaproteobacteria</taxon>
        <taxon>Thiotrichales</taxon>
        <taxon>Piscirickettsiaceae</taxon>
        <taxon>Hydrogenovibrio</taxon>
    </lineage>
</organism>
<dbReference type="EC" id="1.1.1.23" evidence="1"/>
<dbReference type="EMBL" id="CP000109">
    <property type="protein sequence ID" value="ABB41584.1"/>
    <property type="molecule type" value="Genomic_DNA"/>
</dbReference>
<dbReference type="SMR" id="Q31GY9"/>
<dbReference type="STRING" id="317025.Tcr_0989"/>
<dbReference type="KEGG" id="tcx:Tcr_0989"/>
<dbReference type="eggNOG" id="COG0141">
    <property type="taxonomic scope" value="Bacteria"/>
</dbReference>
<dbReference type="HOGENOM" id="CLU_006732_3_3_6"/>
<dbReference type="OrthoDB" id="9805269at2"/>
<dbReference type="UniPathway" id="UPA00031">
    <property type="reaction ID" value="UER00014"/>
</dbReference>
<dbReference type="GO" id="GO:0005829">
    <property type="term" value="C:cytosol"/>
    <property type="evidence" value="ECO:0007669"/>
    <property type="project" value="TreeGrafter"/>
</dbReference>
<dbReference type="GO" id="GO:0004399">
    <property type="term" value="F:histidinol dehydrogenase activity"/>
    <property type="evidence" value="ECO:0007669"/>
    <property type="project" value="UniProtKB-UniRule"/>
</dbReference>
<dbReference type="GO" id="GO:0051287">
    <property type="term" value="F:NAD binding"/>
    <property type="evidence" value="ECO:0007669"/>
    <property type="project" value="InterPro"/>
</dbReference>
<dbReference type="GO" id="GO:0008270">
    <property type="term" value="F:zinc ion binding"/>
    <property type="evidence" value="ECO:0007669"/>
    <property type="project" value="UniProtKB-UniRule"/>
</dbReference>
<dbReference type="GO" id="GO:0000105">
    <property type="term" value="P:L-histidine biosynthetic process"/>
    <property type="evidence" value="ECO:0007669"/>
    <property type="project" value="UniProtKB-UniRule"/>
</dbReference>
<dbReference type="CDD" id="cd06572">
    <property type="entry name" value="Histidinol_dh"/>
    <property type="match status" value="1"/>
</dbReference>
<dbReference type="FunFam" id="3.40.50.1980:FF:000010">
    <property type="entry name" value="Histidinol dehydrogenase"/>
    <property type="match status" value="1"/>
</dbReference>
<dbReference type="FunFam" id="3.40.50.1980:FF:000026">
    <property type="entry name" value="Histidinol dehydrogenase"/>
    <property type="match status" value="1"/>
</dbReference>
<dbReference type="Gene3D" id="1.20.5.1300">
    <property type="match status" value="1"/>
</dbReference>
<dbReference type="Gene3D" id="3.40.50.1980">
    <property type="entry name" value="Nitrogenase molybdenum iron protein domain"/>
    <property type="match status" value="2"/>
</dbReference>
<dbReference type="HAMAP" id="MF_01024">
    <property type="entry name" value="HisD"/>
    <property type="match status" value="1"/>
</dbReference>
<dbReference type="InterPro" id="IPR016161">
    <property type="entry name" value="Ald_DH/histidinol_DH"/>
</dbReference>
<dbReference type="InterPro" id="IPR001692">
    <property type="entry name" value="Histidinol_DH_CS"/>
</dbReference>
<dbReference type="InterPro" id="IPR022695">
    <property type="entry name" value="Histidinol_DH_monofunct"/>
</dbReference>
<dbReference type="InterPro" id="IPR012131">
    <property type="entry name" value="Hstdl_DH"/>
</dbReference>
<dbReference type="NCBIfam" id="TIGR00069">
    <property type="entry name" value="hisD"/>
    <property type="match status" value="1"/>
</dbReference>
<dbReference type="PANTHER" id="PTHR21256:SF2">
    <property type="entry name" value="HISTIDINE BIOSYNTHESIS TRIFUNCTIONAL PROTEIN"/>
    <property type="match status" value="1"/>
</dbReference>
<dbReference type="PANTHER" id="PTHR21256">
    <property type="entry name" value="HISTIDINOL DEHYDROGENASE HDH"/>
    <property type="match status" value="1"/>
</dbReference>
<dbReference type="Pfam" id="PF00815">
    <property type="entry name" value="Histidinol_dh"/>
    <property type="match status" value="1"/>
</dbReference>
<dbReference type="PIRSF" id="PIRSF000099">
    <property type="entry name" value="Histidinol_dh"/>
    <property type="match status" value="1"/>
</dbReference>
<dbReference type="PRINTS" id="PR00083">
    <property type="entry name" value="HOLDHDRGNASE"/>
</dbReference>
<dbReference type="SUPFAM" id="SSF53720">
    <property type="entry name" value="ALDH-like"/>
    <property type="match status" value="1"/>
</dbReference>
<dbReference type="PROSITE" id="PS00611">
    <property type="entry name" value="HISOL_DEHYDROGENASE"/>
    <property type="match status" value="1"/>
</dbReference>
<name>HISX_HYDCU</name>
<accession>Q31GY9</accession>
<feature type="chain" id="PRO_0000229867" description="Histidinol dehydrogenase">
    <location>
        <begin position="1"/>
        <end position="433"/>
    </location>
</feature>
<feature type="active site" description="Proton acceptor" evidence="1">
    <location>
        <position position="330"/>
    </location>
</feature>
<feature type="active site" description="Proton acceptor" evidence="1">
    <location>
        <position position="331"/>
    </location>
</feature>
<feature type="binding site" evidence="1">
    <location>
        <position position="133"/>
    </location>
    <ligand>
        <name>NAD(+)</name>
        <dbReference type="ChEBI" id="CHEBI:57540"/>
    </ligand>
</feature>
<feature type="binding site" evidence="1">
    <location>
        <position position="194"/>
    </location>
    <ligand>
        <name>NAD(+)</name>
        <dbReference type="ChEBI" id="CHEBI:57540"/>
    </ligand>
</feature>
<feature type="binding site" evidence="1">
    <location>
        <position position="217"/>
    </location>
    <ligand>
        <name>NAD(+)</name>
        <dbReference type="ChEBI" id="CHEBI:57540"/>
    </ligand>
</feature>
<feature type="binding site" evidence="1">
    <location>
        <position position="240"/>
    </location>
    <ligand>
        <name>substrate</name>
    </ligand>
</feature>
<feature type="binding site" evidence="1">
    <location>
        <position position="262"/>
    </location>
    <ligand>
        <name>substrate</name>
    </ligand>
</feature>
<feature type="binding site" evidence="1">
    <location>
        <position position="262"/>
    </location>
    <ligand>
        <name>Zn(2+)</name>
        <dbReference type="ChEBI" id="CHEBI:29105"/>
    </ligand>
</feature>
<feature type="binding site" evidence="1">
    <location>
        <position position="265"/>
    </location>
    <ligand>
        <name>substrate</name>
    </ligand>
</feature>
<feature type="binding site" evidence="1">
    <location>
        <position position="265"/>
    </location>
    <ligand>
        <name>Zn(2+)</name>
        <dbReference type="ChEBI" id="CHEBI:29105"/>
    </ligand>
</feature>
<feature type="binding site" evidence="1">
    <location>
        <position position="331"/>
    </location>
    <ligand>
        <name>substrate</name>
    </ligand>
</feature>
<feature type="binding site" evidence="1">
    <location>
        <position position="364"/>
    </location>
    <ligand>
        <name>substrate</name>
    </ligand>
</feature>
<feature type="binding site" evidence="1">
    <location>
        <position position="364"/>
    </location>
    <ligand>
        <name>Zn(2+)</name>
        <dbReference type="ChEBI" id="CHEBI:29105"/>
    </ligand>
</feature>
<feature type="binding site" evidence="1">
    <location>
        <position position="418"/>
    </location>
    <ligand>
        <name>substrate</name>
    </ligand>
</feature>
<feature type="binding site" evidence="1">
    <location>
        <position position="423"/>
    </location>
    <ligand>
        <name>substrate</name>
    </ligand>
</feature>
<feature type="binding site" evidence="1">
    <location>
        <position position="423"/>
    </location>
    <ligand>
        <name>Zn(2+)</name>
        <dbReference type="ChEBI" id="CHEBI:29105"/>
    </ligand>
</feature>